<protein>
    <recommendedName>
        <fullName evidence="1">Putative pre-16S rRNA nuclease</fullName>
        <ecNumber evidence="1">3.1.-.-</ecNumber>
    </recommendedName>
</protein>
<accession>P67493</accession>
<accession>Q8DWX1</accession>
<accession>Q8E2S3</accession>
<keyword id="KW-0963">Cytoplasm</keyword>
<keyword id="KW-0378">Hydrolase</keyword>
<keyword id="KW-0540">Nuclease</keyword>
<keyword id="KW-1185">Reference proteome</keyword>
<keyword id="KW-0690">Ribosome biogenesis</keyword>
<organism>
    <name type="scientific">Streptococcus agalactiae serotype V (strain ATCC BAA-611 / 2603 V/R)</name>
    <dbReference type="NCBI Taxonomy" id="208435"/>
    <lineage>
        <taxon>Bacteria</taxon>
        <taxon>Bacillati</taxon>
        <taxon>Bacillota</taxon>
        <taxon>Bacilli</taxon>
        <taxon>Lactobacillales</taxon>
        <taxon>Streptococcaceae</taxon>
        <taxon>Streptococcus</taxon>
    </lineage>
</organism>
<evidence type="ECO:0000255" key="1">
    <source>
        <dbReference type="HAMAP-Rule" id="MF_00651"/>
    </source>
</evidence>
<evidence type="ECO:0000305" key="2"/>
<comment type="function">
    <text evidence="1">Could be a nuclease involved in processing of the 5'-end of pre-16S rRNA.</text>
</comment>
<comment type="subcellular location">
    <subcellularLocation>
        <location evidence="1">Cytoplasm</location>
    </subcellularLocation>
</comment>
<comment type="similarity">
    <text evidence="1">Belongs to the YqgF nuclease family.</text>
</comment>
<comment type="sequence caution" evidence="2">
    <conflict type="erroneous initiation">
        <sequence resource="EMBL-CDS" id="AAN00949"/>
    </conflict>
    <text>Truncated N-terminus.</text>
</comment>
<gene>
    <name type="ordered locus">SAG2090</name>
</gene>
<feature type="chain" id="PRO_0000172146" description="Putative pre-16S rRNA nuclease">
    <location>
        <begin position="1"/>
        <end position="139"/>
    </location>
</feature>
<reference key="1">
    <citation type="journal article" date="2002" name="Proc. Natl. Acad. Sci. U.S.A.">
        <title>Complete genome sequence and comparative genomic analysis of an emerging human pathogen, serotype V Streptococcus agalactiae.</title>
        <authorList>
            <person name="Tettelin H."/>
            <person name="Masignani V."/>
            <person name="Cieslewicz M.J."/>
            <person name="Eisen J.A."/>
            <person name="Peterson S.N."/>
            <person name="Wessels M.R."/>
            <person name="Paulsen I.T."/>
            <person name="Nelson K.E."/>
            <person name="Margarit I."/>
            <person name="Read T.D."/>
            <person name="Madoff L.C."/>
            <person name="Wolf A.M."/>
            <person name="Beanan M.J."/>
            <person name="Brinkac L.M."/>
            <person name="Daugherty S.C."/>
            <person name="DeBoy R.T."/>
            <person name="Durkin A.S."/>
            <person name="Kolonay J.F."/>
            <person name="Madupu R."/>
            <person name="Lewis M.R."/>
            <person name="Radune D."/>
            <person name="Fedorova N.B."/>
            <person name="Scanlan D."/>
            <person name="Khouri H.M."/>
            <person name="Mulligan S."/>
            <person name="Carty H.A."/>
            <person name="Cline R.T."/>
            <person name="Van Aken S.E."/>
            <person name="Gill J."/>
            <person name="Scarselli M."/>
            <person name="Mora M."/>
            <person name="Iacobini E.T."/>
            <person name="Brettoni C."/>
            <person name="Galli G."/>
            <person name="Mariani M."/>
            <person name="Vegni F."/>
            <person name="Maione D."/>
            <person name="Rinaudo D."/>
            <person name="Rappuoli R."/>
            <person name="Telford J.L."/>
            <person name="Kasper D.L."/>
            <person name="Grandi G."/>
            <person name="Fraser C.M."/>
        </authorList>
    </citation>
    <scope>NUCLEOTIDE SEQUENCE [LARGE SCALE GENOMIC DNA]</scope>
    <source>
        <strain>ATCC BAA-611 / 2603 V/R</strain>
    </source>
</reference>
<sequence>MRIMGLDVGSKTVGVAISDPLGFTAQGLEIIKIDEESGNFGFDRLAELVKEYKVDKFVVGLPKNMNNTSGPRVEASQAYGDKITELFNLPVEYQDERLTTVQAERMLVEQADISRGKRKKVIDKLAAQLILQNYLDRMF</sequence>
<dbReference type="EC" id="3.1.-.-" evidence="1"/>
<dbReference type="EMBL" id="AE009948">
    <property type="protein sequence ID" value="AAN00949.1"/>
    <property type="status" value="ALT_INIT"/>
    <property type="molecule type" value="Genomic_DNA"/>
</dbReference>
<dbReference type="RefSeq" id="NP_689076.1">
    <property type="nucleotide sequence ID" value="NC_004116.1"/>
</dbReference>
<dbReference type="SMR" id="P67493"/>
<dbReference type="STRING" id="208435.SAG2090"/>
<dbReference type="KEGG" id="sag:SAG2090"/>
<dbReference type="PATRIC" id="fig|208435.3.peg.2092"/>
<dbReference type="HOGENOM" id="CLU_098240_2_0_9"/>
<dbReference type="OrthoDB" id="9796140at2"/>
<dbReference type="Proteomes" id="UP000000821">
    <property type="component" value="Chromosome"/>
</dbReference>
<dbReference type="GO" id="GO:0005829">
    <property type="term" value="C:cytosol"/>
    <property type="evidence" value="ECO:0007669"/>
    <property type="project" value="TreeGrafter"/>
</dbReference>
<dbReference type="GO" id="GO:0004518">
    <property type="term" value="F:nuclease activity"/>
    <property type="evidence" value="ECO:0007669"/>
    <property type="project" value="UniProtKB-KW"/>
</dbReference>
<dbReference type="GO" id="GO:0000967">
    <property type="term" value="P:rRNA 5'-end processing"/>
    <property type="evidence" value="ECO:0007669"/>
    <property type="project" value="UniProtKB-UniRule"/>
</dbReference>
<dbReference type="CDD" id="cd16964">
    <property type="entry name" value="YqgF"/>
    <property type="match status" value="1"/>
</dbReference>
<dbReference type="FunFam" id="3.30.420.140:FF:000003">
    <property type="entry name" value="Putative pre-16S rRNA nuclease"/>
    <property type="match status" value="1"/>
</dbReference>
<dbReference type="Gene3D" id="3.30.420.140">
    <property type="entry name" value="YqgF/RNase H-like domain"/>
    <property type="match status" value="1"/>
</dbReference>
<dbReference type="HAMAP" id="MF_00651">
    <property type="entry name" value="Nuclease_YqgF"/>
    <property type="match status" value="1"/>
</dbReference>
<dbReference type="InterPro" id="IPR012337">
    <property type="entry name" value="RNaseH-like_sf"/>
</dbReference>
<dbReference type="InterPro" id="IPR005227">
    <property type="entry name" value="YqgF"/>
</dbReference>
<dbReference type="InterPro" id="IPR006641">
    <property type="entry name" value="YqgF/RNaseH-like_dom"/>
</dbReference>
<dbReference type="InterPro" id="IPR037027">
    <property type="entry name" value="YqgF/RNaseH-like_dom_sf"/>
</dbReference>
<dbReference type="NCBIfam" id="TIGR00250">
    <property type="entry name" value="RNAse_H_YqgF"/>
    <property type="match status" value="1"/>
</dbReference>
<dbReference type="PANTHER" id="PTHR33317">
    <property type="entry name" value="POLYNUCLEOTIDYL TRANSFERASE, RIBONUCLEASE H-LIKE SUPERFAMILY PROTEIN"/>
    <property type="match status" value="1"/>
</dbReference>
<dbReference type="PANTHER" id="PTHR33317:SF4">
    <property type="entry name" value="POLYNUCLEOTIDYL TRANSFERASE, RIBONUCLEASE H-LIKE SUPERFAMILY PROTEIN"/>
    <property type="match status" value="1"/>
</dbReference>
<dbReference type="Pfam" id="PF03652">
    <property type="entry name" value="RuvX"/>
    <property type="match status" value="1"/>
</dbReference>
<dbReference type="SMART" id="SM00732">
    <property type="entry name" value="YqgFc"/>
    <property type="match status" value="1"/>
</dbReference>
<dbReference type="SUPFAM" id="SSF53098">
    <property type="entry name" value="Ribonuclease H-like"/>
    <property type="match status" value="1"/>
</dbReference>
<name>YQGF_STRA5</name>
<proteinExistence type="inferred from homology"/>